<name>PHS_SHEHH</name>
<reference key="1">
    <citation type="submission" date="2008-01" db="EMBL/GenBank/DDBJ databases">
        <title>Complete sequence of Shewanella halifaxensis HAW-EB4.</title>
        <authorList>
            <consortium name="US DOE Joint Genome Institute"/>
            <person name="Copeland A."/>
            <person name="Lucas S."/>
            <person name="Lapidus A."/>
            <person name="Glavina del Rio T."/>
            <person name="Dalin E."/>
            <person name="Tice H."/>
            <person name="Bruce D."/>
            <person name="Goodwin L."/>
            <person name="Pitluck S."/>
            <person name="Sims D."/>
            <person name="Brettin T."/>
            <person name="Detter J.C."/>
            <person name="Han C."/>
            <person name="Kuske C.R."/>
            <person name="Schmutz J."/>
            <person name="Larimer F."/>
            <person name="Land M."/>
            <person name="Hauser L."/>
            <person name="Kyrpides N."/>
            <person name="Kim E."/>
            <person name="Zhao J.-S."/>
            <person name="Richardson P."/>
        </authorList>
    </citation>
    <scope>NUCLEOTIDE SEQUENCE [LARGE SCALE GENOMIC DNA]</scope>
    <source>
        <strain>HAW-EB4</strain>
    </source>
</reference>
<dbReference type="EC" id="4.2.1.96" evidence="1"/>
<dbReference type="EMBL" id="CP000931">
    <property type="protein sequence ID" value="ABZ76098.1"/>
    <property type="molecule type" value="Genomic_DNA"/>
</dbReference>
<dbReference type="RefSeq" id="WP_012276638.1">
    <property type="nucleotide sequence ID" value="NC_010334.1"/>
</dbReference>
<dbReference type="SMR" id="B0TNB2"/>
<dbReference type="STRING" id="458817.Shal_1532"/>
<dbReference type="KEGG" id="shl:Shal_1532"/>
<dbReference type="eggNOG" id="COG2154">
    <property type="taxonomic scope" value="Bacteria"/>
</dbReference>
<dbReference type="HOGENOM" id="CLU_081974_2_2_6"/>
<dbReference type="OrthoDB" id="5294615at2"/>
<dbReference type="Proteomes" id="UP000001317">
    <property type="component" value="Chromosome"/>
</dbReference>
<dbReference type="GO" id="GO:0008124">
    <property type="term" value="F:4-alpha-hydroxytetrahydrobiopterin dehydratase activity"/>
    <property type="evidence" value="ECO:0007669"/>
    <property type="project" value="UniProtKB-UniRule"/>
</dbReference>
<dbReference type="GO" id="GO:0006729">
    <property type="term" value="P:tetrahydrobiopterin biosynthetic process"/>
    <property type="evidence" value="ECO:0007669"/>
    <property type="project" value="InterPro"/>
</dbReference>
<dbReference type="CDD" id="cd00913">
    <property type="entry name" value="PCD_DCoH_subfamily_a"/>
    <property type="match status" value="1"/>
</dbReference>
<dbReference type="Gene3D" id="3.30.1360.20">
    <property type="entry name" value="Transcriptional coactivator/pterin dehydratase"/>
    <property type="match status" value="1"/>
</dbReference>
<dbReference type="HAMAP" id="MF_00434">
    <property type="entry name" value="Pterin_4_alpha"/>
    <property type="match status" value="1"/>
</dbReference>
<dbReference type="InterPro" id="IPR036428">
    <property type="entry name" value="PCD_sf"/>
</dbReference>
<dbReference type="InterPro" id="IPR050376">
    <property type="entry name" value="Pterin-4-alpha-carb_dehyd"/>
</dbReference>
<dbReference type="InterPro" id="IPR001533">
    <property type="entry name" value="Pterin_deHydtase"/>
</dbReference>
<dbReference type="NCBIfam" id="NF002016">
    <property type="entry name" value="PRK00823.1-1"/>
    <property type="match status" value="1"/>
</dbReference>
<dbReference type="PANTHER" id="PTHR42805">
    <property type="entry name" value="PTERIN-4-ALPHA-CARBINOLAMINE DEHYDRATASE-RELATED"/>
    <property type="match status" value="1"/>
</dbReference>
<dbReference type="PANTHER" id="PTHR42805:SF1">
    <property type="entry name" value="PTERIN-4-ALPHA-CARBINOLAMINE DEHYDRATASE-RELATED"/>
    <property type="match status" value="1"/>
</dbReference>
<dbReference type="Pfam" id="PF01329">
    <property type="entry name" value="Pterin_4a"/>
    <property type="match status" value="1"/>
</dbReference>
<dbReference type="SUPFAM" id="SSF55248">
    <property type="entry name" value="PCD-like"/>
    <property type="match status" value="1"/>
</dbReference>
<feature type="chain" id="PRO_1000080614" description="Putative pterin-4-alpha-carbinolamine dehydratase">
    <location>
        <begin position="1"/>
        <end position="112"/>
    </location>
</feature>
<accession>B0TNB2</accession>
<sequence>MTELAQMKCEACQADAPKVTDDELAQLIAKIPDWGVEVRDGIMQLERVYKFKNFKLAMAFTNKLADLAEADFHHPGILTEWGKVTVTWWSHSIKGLHKNDFIMAAKTDTLLD</sequence>
<organism>
    <name type="scientific">Shewanella halifaxensis (strain HAW-EB4)</name>
    <dbReference type="NCBI Taxonomy" id="458817"/>
    <lineage>
        <taxon>Bacteria</taxon>
        <taxon>Pseudomonadati</taxon>
        <taxon>Pseudomonadota</taxon>
        <taxon>Gammaproteobacteria</taxon>
        <taxon>Alteromonadales</taxon>
        <taxon>Shewanellaceae</taxon>
        <taxon>Shewanella</taxon>
    </lineage>
</organism>
<gene>
    <name type="ordered locus">Shal_1532</name>
</gene>
<evidence type="ECO:0000255" key="1">
    <source>
        <dbReference type="HAMAP-Rule" id="MF_00434"/>
    </source>
</evidence>
<comment type="catalytic activity">
    <reaction evidence="1">
        <text>(4aS,6R)-4a-hydroxy-L-erythro-5,6,7,8-tetrahydrobiopterin = (6R)-L-erythro-6,7-dihydrobiopterin + H2O</text>
        <dbReference type="Rhea" id="RHEA:11920"/>
        <dbReference type="ChEBI" id="CHEBI:15377"/>
        <dbReference type="ChEBI" id="CHEBI:15642"/>
        <dbReference type="ChEBI" id="CHEBI:43120"/>
        <dbReference type="EC" id="4.2.1.96"/>
    </reaction>
</comment>
<comment type="similarity">
    <text evidence="1">Belongs to the pterin-4-alpha-carbinolamine dehydratase family.</text>
</comment>
<keyword id="KW-0456">Lyase</keyword>
<protein>
    <recommendedName>
        <fullName evidence="1">Putative pterin-4-alpha-carbinolamine dehydratase</fullName>
        <shortName evidence="1">PHS</shortName>
        <ecNumber evidence="1">4.2.1.96</ecNumber>
    </recommendedName>
    <alternativeName>
        <fullName evidence="1">4-alpha-hydroxy-tetrahydropterin dehydratase</fullName>
    </alternativeName>
    <alternativeName>
        <fullName evidence="1">Pterin carbinolamine dehydratase</fullName>
        <shortName evidence="1">PCD</shortName>
    </alternativeName>
</protein>
<proteinExistence type="inferred from homology"/>